<dbReference type="EMBL" id="AF110985">
    <property type="protein sequence ID" value="AAF64548.1"/>
    <property type="molecule type" value="Genomic_DNA"/>
</dbReference>
<dbReference type="EMBL" id="AC064840">
    <property type="protein sequence ID" value="AAG00882.1"/>
    <property type="molecule type" value="Genomic_DNA"/>
</dbReference>
<dbReference type="EMBL" id="AC069144">
    <property type="protein sequence ID" value="AAG51112.1"/>
    <property type="molecule type" value="Genomic_DNA"/>
</dbReference>
<dbReference type="EMBL" id="CP002684">
    <property type="protein sequence ID" value="AEE33168.1"/>
    <property type="molecule type" value="Genomic_DNA"/>
</dbReference>
<dbReference type="PIR" id="B96591">
    <property type="entry name" value="B96591"/>
</dbReference>
<dbReference type="PIR" id="T52078">
    <property type="entry name" value="T52078"/>
</dbReference>
<dbReference type="RefSeq" id="NP_175895.1">
    <property type="nucleotide sequence ID" value="NM_104371.2"/>
</dbReference>
<dbReference type="STRING" id="3702.Q9FZ35"/>
<dbReference type="PaxDb" id="3702-AT1G54970.1"/>
<dbReference type="ProteomicsDB" id="226509"/>
<dbReference type="EnsemblPlants" id="AT1G54970.1">
    <property type="protein sequence ID" value="AT1G54970.1"/>
    <property type="gene ID" value="AT1G54970"/>
</dbReference>
<dbReference type="GeneID" id="841938"/>
<dbReference type="Gramene" id="AT1G54970.1">
    <property type="protein sequence ID" value="AT1G54970.1"/>
    <property type="gene ID" value="AT1G54970"/>
</dbReference>
<dbReference type="KEGG" id="ath:AT1G54970"/>
<dbReference type="Araport" id="AT1G54970"/>
<dbReference type="TAIR" id="AT1G54970">
    <property type="gene designation" value="PRP1"/>
</dbReference>
<dbReference type="eggNOG" id="ENOG502SDZ3">
    <property type="taxonomic scope" value="Eukaryota"/>
</dbReference>
<dbReference type="HOGENOM" id="CLU_071703_0_0_1"/>
<dbReference type="InParanoid" id="Q9FZ35"/>
<dbReference type="OMA" id="ILQSRQC"/>
<dbReference type="OrthoDB" id="1847243at2759"/>
<dbReference type="PhylomeDB" id="Q9FZ35"/>
<dbReference type="PRO" id="PR:Q9FZ35"/>
<dbReference type="Proteomes" id="UP000006548">
    <property type="component" value="Chromosome 1"/>
</dbReference>
<dbReference type="ExpressionAtlas" id="Q9FZ35">
    <property type="expression patterns" value="baseline and differential"/>
</dbReference>
<dbReference type="GO" id="GO:0005576">
    <property type="term" value="C:extracellular region"/>
    <property type="evidence" value="ECO:0007669"/>
    <property type="project" value="UniProtKB-KW"/>
</dbReference>
<dbReference type="PANTHER" id="PTHR33470">
    <property type="entry name" value="OS01G0164075 PROTEIN"/>
    <property type="match status" value="1"/>
</dbReference>
<dbReference type="PANTHER" id="PTHR33470:SF50">
    <property type="entry name" value="PROLINE-RICH PROTEIN 1-RELATED"/>
    <property type="match status" value="1"/>
</dbReference>
<dbReference type="Pfam" id="PF01190">
    <property type="entry name" value="Pollen_Ole_e_1"/>
    <property type="match status" value="1"/>
</dbReference>
<dbReference type="PRINTS" id="PR01217">
    <property type="entry name" value="PRICHEXTENSN"/>
</dbReference>
<sequence length="335" mass="36517">MAITRASFAICILLSLATIATADYYAPSSPPVYTSPVNKPTLPPPVYTPPVHKPTLPPPVYTPPVHKPTLSPPVYTKPTLPPPAYTPPVYNKPTLPAPVYTPPVYKPTLSPPVYTKPTLLPPVFKPTLSPPVYTKPTLSPTVYKPTLSPPVNNKPSLSPPVYKPTLSPPVYTKPTLPPPVYKKSPSYSPPPPFAPKPTYTPPTKPYVPEIIKAVGGIILCKNGYETYPIQGAKAKIVCSERGSYEKSKNEVVIYSDPTDFKGYFHVVLTHIKNLSNCRVKLYTSPVETCKNPTNVNKGLTGVPFSMYSDKNLKLFNVGPFYFTAGSKAAPATPRY</sequence>
<reference key="1">
    <citation type="journal article" date="1999" name="Plant Physiol.">
        <title>Characterization and expression of four proline-rich cell wall protein genes in Arabidopsis encoding two distinct subsets of multiple domain proteins.</title>
        <authorList>
            <person name="Fowler T.J."/>
            <person name="Bernhardt C."/>
            <person name="Tierney M.L."/>
        </authorList>
    </citation>
    <scope>NUCLEOTIDE SEQUENCE [GENOMIC DNA]</scope>
    <scope>TISSUE SPECIFICITY</scope>
    <source>
        <strain>cv. Columbia</strain>
        <strain>cv. Landsberg erecta</strain>
    </source>
</reference>
<reference key="2">
    <citation type="journal article" date="2000" name="Nature">
        <title>Sequence and analysis of chromosome 1 of the plant Arabidopsis thaliana.</title>
        <authorList>
            <person name="Theologis A."/>
            <person name="Ecker J.R."/>
            <person name="Palm C.J."/>
            <person name="Federspiel N.A."/>
            <person name="Kaul S."/>
            <person name="White O."/>
            <person name="Alonso J."/>
            <person name="Altafi H."/>
            <person name="Araujo R."/>
            <person name="Bowman C.L."/>
            <person name="Brooks S.Y."/>
            <person name="Buehler E."/>
            <person name="Chan A."/>
            <person name="Chao Q."/>
            <person name="Chen H."/>
            <person name="Cheuk R.F."/>
            <person name="Chin C.W."/>
            <person name="Chung M.K."/>
            <person name="Conn L."/>
            <person name="Conway A.B."/>
            <person name="Conway A.R."/>
            <person name="Creasy T.H."/>
            <person name="Dewar K."/>
            <person name="Dunn P."/>
            <person name="Etgu P."/>
            <person name="Feldblyum T.V."/>
            <person name="Feng J.-D."/>
            <person name="Fong B."/>
            <person name="Fujii C.Y."/>
            <person name="Gill J.E."/>
            <person name="Goldsmith A.D."/>
            <person name="Haas B."/>
            <person name="Hansen N.F."/>
            <person name="Hughes B."/>
            <person name="Huizar L."/>
            <person name="Hunter J.L."/>
            <person name="Jenkins J."/>
            <person name="Johnson-Hopson C."/>
            <person name="Khan S."/>
            <person name="Khaykin E."/>
            <person name="Kim C.J."/>
            <person name="Koo H.L."/>
            <person name="Kremenetskaia I."/>
            <person name="Kurtz D.B."/>
            <person name="Kwan A."/>
            <person name="Lam B."/>
            <person name="Langin-Hooper S."/>
            <person name="Lee A."/>
            <person name="Lee J.M."/>
            <person name="Lenz C.A."/>
            <person name="Li J.H."/>
            <person name="Li Y.-P."/>
            <person name="Lin X."/>
            <person name="Liu S.X."/>
            <person name="Liu Z.A."/>
            <person name="Luros J.S."/>
            <person name="Maiti R."/>
            <person name="Marziali A."/>
            <person name="Militscher J."/>
            <person name="Miranda M."/>
            <person name="Nguyen M."/>
            <person name="Nierman W.C."/>
            <person name="Osborne B.I."/>
            <person name="Pai G."/>
            <person name="Peterson J."/>
            <person name="Pham P.K."/>
            <person name="Rizzo M."/>
            <person name="Rooney T."/>
            <person name="Rowley D."/>
            <person name="Sakano H."/>
            <person name="Salzberg S.L."/>
            <person name="Schwartz J.R."/>
            <person name="Shinn P."/>
            <person name="Southwick A.M."/>
            <person name="Sun H."/>
            <person name="Tallon L.J."/>
            <person name="Tambunga G."/>
            <person name="Toriumi M.J."/>
            <person name="Town C.D."/>
            <person name="Utterback T."/>
            <person name="Van Aken S."/>
            <person name="Vaysberg M."/>
            <person name="Vysotskaia V.S."/>
            <person name="Walker M."/>
            <person name="Wu D."/>
            <person name="Yu G."/>
            <person name="Fraser C.M."/>
            <person name="Venter J.C."/>
            <person name="Davis R.W."/>
        </authorList>
    </citation>
    <scope>NUCLEOTIDE SEQUENCE [LARGE SCALE GENOMIC DNA]</scope>
    <source>
        <strain>cv. Columbia</strain>
    </source>
</reference>
<reference key="3">
    <citation type="journal article" date="2017" name="Plant J.">
        <title>Araport11: a complete reannotation of the Arabidopsis thaliana reference genome.</title>
        <authorList>
            <person name="Cheng C.Y."/>
            <person name="Krishnakumar V."/>
            <person name="Chan A.P."/>
            <person name="Thibaud-Nissen F."/>
            <person name="Schobel S."/>
            <person name="Town C.D."/>
        </authorList>
    </citation>
    <scope>GENOME REANNOTATION</scope>
    <source>
        <strain>cv. Columbia</strain>
    </source>
</reference>
<reference key="4">
    <citation type="journal article" date="2009" name="Plant Physiol.">
        <title>Cis-element- and transcriptome-based screening of root hair-specific genes and their functional characterization in Arabidopsis.</title>
        <authorList>
            <person name="Won S.-K."/>
            <person name="Lee Y.-J."/>
            <person name="Lee H.-Y."/>
            <person name="Heo Y.-K."/>
            <person name="Cho M."/>
            <person name="Cho H.-T."/>
        </authorList>
    </citation>
    <scope>TISSUE SPECIFICITY</scope>
</reference>
<name>PRP1_ARATH</name>
<keyword id="KW-0134">Cell wall</keyword>
<keyword id="KW-1185">Reference proteome</keyword>
<keyword id="KW-0677">Repeat</keyword>
<keyword id="KW-0964">Secreted</keyword>
<keyword id="KW-0732">Signal</keyword>
<proteinExistence type="evidence at transcript level"/>
<evidence type="ECO:0000250" key="1"/>
<evidence type="ECO:0000255" key="2"/>
<evidence type="ECO:0000269" key="3">
    <source>
    </source>
</evidence>
<evidence type="ECO:0000269" key="4">
    <source>
    </source>
</evidence>
<evidence type="ECO:0000305" key="5"/>
<gene>
    <name type="primary">PRP1</name>
    <name type="synonym">RHS7</name>
    <name type="ordered locus">At1g54970</name>
    <name type="ORF">F14C21.50</name>
    <name type="ORF">T24C10.8</name>
</gene>
<feature type="signal peptide" evidence="2">
    <location>
        <begin position="1"/>
        <end position="22"/>
    </location>
</feature>
<feature type="chain" id="PRO_0000419272" description="Proline-rich protein 1">
    <location>
        <begin position="23"/>
        <end position="335"/>
    </location>
</feature>
<feature type="repeat" description="1">
    <location>
        <begin position="30"/>
        <end position="34"/>
    </location>
</feature>
<feature type="repeat" description="2">
    <location>
        <begin position="35"/>
        <end position="39"/>
    </location>
</feature>
<feature type="repeat" description="3">
    <location>
        <begin position="40"/>
        <end position="43"/>
    </location>
</feature>
<feature type="repeat" description="4">
    <location>
        <begin position="44"/>
        <end position="48"/>
    </location>
</feature>
<feature type="repeat" description="5">
    <location>
        <begin position="49"/>
        <end position="53"/>
    </location>
</feature>
<feature type="repeat" description="6">
    <location>
        <begin position="54"/>
        <end position="57"/>
    </location>
</feature>
<feature type="repeat" description="7">
    <location>
        <begin position="58"/>
        <end position="62"/>
    </location>
</feature>
<feature type="repeat" description="8">
    <location>
        <begin position="63"/>
        <end position="67"/>
    </location>
</feature>
<feature type="repeat" description="9">
    <location>
        <begin position="68"/>
        <end position="71"/>
    </location>
</feature>
<feature type="repeat" description="10">
    <location>
        <begin position="72"/>
        <end position="76"/>
    </location>
</feature>
<feature type="repeat" description="11">
    <location>
        <begin position="77"/>
        <end position="81"/>
    </location>
</feature>
<feature type="repeat" description="12">
    <location>
        <begin position="82"/>
        <end position="86"/>
    </location>
</feature>
<feature type="repeat" description="13">
    <location>
        <begin position="87"/>
        <end position="91"/>
    </location>
</feature>
<feature type="repeat" description="14">
    <location>
        <begin position="92"/>
        <end position="96"/>
    </location>
</feature>
<feature type="repeat" description="15">
    <location>
        <begin position="97"/>
        <end position="101"/>
    </location>
</feature>
<feature type="repeat" description="16">
    <location>
        <begin position="102"/>
        <end position="106"/>
    </location>
</feature>
<feature type="repeat" description="17">
    <location>
        <begin position="107"/>
        <end position="110"/>
    </location>
</feature>
<feature type="repeat" description="18">
    <location>
        <begin position="111"/>
        <end position="115"/>
    </location>
</feature>
<feature type="repeat" description="19">
    <location>
        <begin position="116"/>
        <end position="120"/>
    </location>
</feature>
<feature type="repeat" description="20">
    <location>
        <begin position="121"/>
        <end position="125"/>
    </location>
</feature>
<feature type="repeat" description="21">
    <location>
        <begin position="126"/>
        <end position="130"/>
    </location>
</feature>
<feature type="repeat" description="22">
    <location>
        <begin position="131"/>
        <end position="135"/>
    </location>
</feature>
<feature type="repeat" description="23">
    <location>
        <begin position="136"/>
        <end position="139"/>
    </location>
</feature>
<feature type="repeat" description="24">
    <location>
        <begin position="140"/>
        <end position="144"/>
    </location>
</feature>
<feature type="repeat" description="25">
    <location>
        <begin position="145"/>
        <end position="148"/>
    </location>
</feature>
<feature type="repeat" description="26">
    <location>
        <begin position="149"/>
        <end position="153"/>
    </location>
</feature>
<feature type="repeat" description="27">
    <location>
        <begin position="154"/>
        <end position="158"/>
    </location>
</feature>
<feature type="repeat" description="28">
    <location>
        <begin position="159"/>
        <end position="163"/>
    </location>
</feature>
<feature type="repeat" description="29">
    <location>
        <begin position="164"/>
        <end position="167"/>
    </location>
</feature>
<feature type="repeat" description="30">
    <location>
        <begin position="168"/>
        <end position="172"/>
    </location>
</feature>
<feature type="repeat" description="31">
    <location>
        <begin position="173"/>
        <end position="177"/>
    </location>
</feature>
<feature type="repeat" description="32">
    <location>
        <begin position="178"/>
        <end position="182"/>
    </location>
</feature>
<feature type="repeat" description="33">
    <location>
        <begin position="184"/>
        <end position="189"/>
    </location>
</feature>
<feature type="repeat" description="34">
    <location>
        <begin position="190"/>
        <end position="194"/>
    </location>
</feature>
<feature type="repeat" description="35">
    <location>
        <begin position="195"/>
        <end position="200"/>
    </location>
</feature>
<feature type="repeat" description="36">
    <location>
        <begin position="201"/>
        <end position="207"/>
    </location>
</feature>
<feature type="repeat" description="37">
    <location>
        <begin position="208"/>
        <end position="212"/>
    </location>
</feature>
<feature type="repeat" description="38">
    <location>
        <begin position="284"/>
        <end position="288"/>
    </location>
</feature>
<feature type="repeat" description="39">
    <location>
        <begin position="319"/>
        <end position="323"/>
    </location>
</feature>
<feature type="region of interest" description="39 X 5 AA approximate repeats">
    <location>
        <begin position="30"/>
        <end position="323"/>
    </location>
</feature>
<feature type="sequence conflict" description="In Ref. 1; AAF64548." evidence="5" ref="1">
    <original>S</original>
    <variation>I</variation>
    <location>
        <position position="186"/>
    </location>
</feature>
<accession>Q9FZ35</accession>
<accession>Q9M7P1</accession>
<organism>
    <name type="scientific">Arabidopsis thaliana</name>
    <name type="common">Mouse-ear cress</name>
    <dbReference type="NCBI Taxonomy" id="3702"/>
    <lineage>
        <taxon>Eukaryota</taxon>
        <taxon>Viridiplantae</taxon>
        <taxon>Streptophyta</taxon>
        <taxon>Embryophyta</taxon>
        <taxon>Tracheophyta</taxon>
        <taxon>Spermatophyta</taxon>
        <taxon>Magnoliopsida</taxon>
        <taxon>eudicotyledons</taxon>
        <taxon>Gunneridae</taxon>
        <taxon>Pentapetalae</taxon>
        <taxon>rosids</taxon>
        <taxon>malvids</taxon>
        <taxon>Brassicales</taxon>
        <taxon>Brassicaceae</taxon>
        <taxon>Camelineae</taxon>
        <taxon>Arabidopsis</taxon>
    </lineage>
</organism>
<protein>
    <recommendedName>
        <fullName>Proline-rich protein 1</fullName>
        <shortName>AtPRP1</shortName>
    </recommendedName>
    <alternativeName>
        <fullName>Protein ROOT HAIR SPECIFIC 7</fullName>
    </alternativeName>
</protein>
<comment type="function">
    <text evidence="1">May contribute to cell wall structure in root hairs.</text>
</comment>
<comment type="subcellular location">
    <subcellularLocation>
        <location evidence="5">Secreted</location>
        <location evidence="5">Cell wall</location>
    </subcellularLocation>
</comment>
<comment type="tissue specificity">
    <text evidence="3 4">Exclusively expressed in roots, especially in root hairs.</text>
</comment>
<comment type="similarity">
    <text evidence="5">Belongs to the plant proline-rich protein superfamily. ENOD12 family.</text>
</comment>